<name>PEPB_HAEIN</name>
<proteinExistence type="uncertain"/>
<gene>
    <name evidence="1" type="primary">pepB</name>
    <name type="ordered locus">HI_0875</name>
</gene>
<accession>P58474</accession>
<sequence>MQITLSNTLANDAWGKNAILSFDSNKAMIHLKNNGKTDRTLVQQAARKLRGQGIKEVELVGEKWDLEFCWAFYQGFYTAKQDYAIEFPHLDDEPQDELLARIECGDFVRGIINEPAQSLTPVKLVERAAEFILNQADIYNEKSAVSFKIISGEELEQQGYHGIWTVGKGSANLPAMLQLDFNPTQDSNAPVLACLVGKGITFDSGGYSIKPSDGMSTMRTDMGGAALLTGALGFAIARGLNQRVKLYLCCAENLVSNNAFKLGDIITYKNGVSAEVLNTDAEGRLVLADGLIEADNQNPGFIIDCATLTGAAKSAVGNDYHSVLSMDDELVKNLFQSAQAENEPFWRLPFEDFHRSQINSSFADIANIGSVPVGAGASTATAFLSYFVKNYKQNWLHIDCSATYRKSGSDLWSVGATGIGVQTLANLMLSRSLK</sequence>
<dbReference type="EC" id="3.4.11.23" evidence="1"/>
<dbReference type="EMBL" id="L42023">
    <property type="status" value="NOT_ANNOTATED_CDS"/>
    <property type="molecule type" value="Genomic_DNA"/>
</dbReference>
<dbReference type="SMR" id="P58474"/>
<dbReference type="MEROPS" id="M17.004"/>
<dbReference type="PhylomeDB" id="P58474"/>
<dbReference type="Proteomes" id="UP000000579">
    <property type="component" value="Chromosome"/>
</dbReference>
<dbReference type="GO" id="GO:0005737">
    <property type="term" value="C:cytoplasm"/>
    <property type="evidence" value="ECO:0000318"/>
    <property type="project" value="GO_Central"/>
</dbReference>
<dbReference type="GO" id="GO:0030145">
    <property type="term" value="F:manganese ion binding"/>
    <property type="evidence" value="ECO:0007669"/>
    <property type="project" value="UniProtKB-UniRule"/>
</dbReference>
<dbReference type="GO" id="GO:0070006">
    <property type="term" value="F:metalloaminopeptidase activity"/>
    <property type="evidence" value="ECO:0007669"/>
    <property type="project" value="InterPro"/>
</dbReference>
<dbReference type="GO" id="GO:0008233">
    <property type="term" value="F:peptidase activity"/>
    <property type="evidence" value="ECO:0000318"/>
    <property type="project" value="GO_Central"/>
</dbReference>
<dbReference type="GO" id="GO:0006508">
    <property type="term" value="P:proteolysis"/>
    <property type="evidence" value="ECO:0000318"/>
    <property type="project" value="GO_Central"/>
</dbReference>
<dbReference type="CDD" id="cd00433">
    <property type="entry name" value="Peptidase_M17"/>
    <property type="match status" value="1"/>
</dbReference>
<dbReference type="Gene3D" id="3.40.630.10">
    <property type="entry name" value="Zn peptidases"/>
    <property type="match status" value="1"/>
</dbReference>
<dbReference type="HAMAP" id="MF_00504">
    <property type="entry name" value="Aminopeptidase_M17"/>
    <property type="match status" value="1"/>
</dbReference>
<dbReference type="InterPro" id="IPR011356">
    <property type="entry name" value="Leucine_aapep/pepB"/>
</dbReference>
<dbReference type="InterPro" id="IPR047620">
    <property type="entry name" value="M17_PepB-like_N"/>
</dbReference>
<dbReference type="InterPro" id="IPR008330">
    <property type="entry name" value="Pept_M17_PepB"/>
</dbReference>
<dbReference type="InterPro" id="IPR000819">
    <property type="entry name" value="Peptidase_M17_C"/>
</dbReference>
<dbReference type="NCBIfam" id="NF003450">
    <property type="entry name" value="PRK05015.1"/>
    <property type="match status" value="1"/>
</dbReference>
<dbReference type="PANTHER" id="PTHR11963">
    <property type="entry name" value="LEUCINE AMINOPEPTIDASE-RELATED"/>
    <property type="match status" value="1"/>
</dbReference>
<dbReference type="PANTHER" id="PTHR11963:SF20">
    <property type="entry name" value="PEPTIDASE B"/>
    <property type="match status" value="1"/>
</dbReference>
<dbReference type="Pfam" id="PF12404">
    <property type="entry name" value="DUF3663"/>
    <property type="match status" value="1"/>
</dbReference>
<dbReference type="Pfam" id="PF00883">
    <property type="entry name" value="Peptidase_M17"/>
    <property type="match status" value="1"/>
</dbReference>
<dbReference type="PIRSF" id="PIRSF036388">
    <property type="entry name" value="Ctsl_amnpptdse_B"/>
    <property type="match status" value="1"/>
</dbReference>
<dbReference type="PRINTS" id="PR00481">
    <property type="entry name" value="LAMNOPPTDASE"/>
</dbReference>
<dbReference type="SUPFAM" id="SSF53187">
    <property type="entry name" value="Zn-dependent exopeptidases"/>
    <property type="match status" value="1"/>
</dbReference>
<dbReference type="PROSITE" id="PS00631">
    <property type="entry name" value="CYTOSOL_AP"/>
    <property type="match status" value="1"/>
</dbReference>
<feature type="chain" id="PRO_0000165836" description="Putative peptidase B">
    <location>
        <begin position="1"/>
        <end position="434"/>
    </location>
</feature>
<feature type="active site" evidence="1">
    <location>
        <position position="210"/>
    </location>
</feature>
<feature type="active site" evidence="1">
    <location>
        <position position="284"/>
    </location>
</feature>
<feature type="binding site" evidence="1">
    <location>
        <position position="198"/>
    </location>
    <ligand>
        <name>Mn(2+)</name>
        <dbReference type="ChEBI" id="CHEBI:29035"/>
        <label>2</label>
    </ligand>
</feature>
<feature type="binding site" evidence="1">
    <location>
        <position position="203"/>
    </location>
    <ligand>
        <name>Mn(2+)</name>
        <dbReference type="ChEBI" id="CHEBI:29035"/>
        <label>1</label>
    </ligand>
</feature>
<feature type="binding site" evidence="1">
    <location>
        <position position="203"/>
    </location>
    <ligand>
        <name>Mn(2+)</name>
        <dbReference type="ChEBI" id="CHEBI:29035"/>
        <label>2</label>
    </ligand>
</feature>
<feature type="binding site" evidence="1">
    <location>
        <position position="221"/>
    </location>
    <ligand>
        <name>Mn(2+)</name>
        <dbReference type="ChEBI" id="CHEBI:29035"/>
        <label>2</label>
    </ligand>
</feature>
<feature type="binding site" evidence="1">
    <location>
        <position position="280"/>
    </location>
    <ligand>
        <name>Mn(2+)</name>
        <dbReference type="ChEBI" id="CHEBI:29035"/>
        <label>1</label>
    </ligand>
</feature>
<feature type="binding site" evidence="1">
    <location>
        <position position="282"/>
    </location>
    <ligand>
        <name>Mn(2+)</name>
        <dbReference type="ChEBI" id="CHEBI:29035"/>
        <label>1</label>
    </ligand>
</feature>
<feature type="binding site" evidence="1">
    <location>
        <position position="282"/>
    </location>
    <ligand>
        <name>Mn(2+)</name>
        <dbReference type="ChEBI" id="CHEBI:29035"/>
        <label>2</label>
    </ligand>
</feature>
<evidence type="ECO:0000255" key="1">
    <source>
        <dbReference type="HAMAP-Rule" id="MF_00504"/>
    </source>
</evidence>
<evidence type="ECO:0000305" key="2"/>
<organism>
    <name type="scientific">Haemophilus influenzae (strain ATCC 51907 / DSM 11121 / KW20 / Rd)</name>
    <dbReference type="NCBI Taxonomy" id="71421"/>
    <lineage>
        <taxon>Bacteria</taxon>
        <taxon>Pseudomonadati</taxon>
        <taxon>Pseudomonadota</taxon>
        <taxon>Gammaproteobacteria</taxon>
        <taxon>Pasteurellales</taxon>
        <taxon>Pasteurellaceae</taxon>
        <taxon>Haemophilus</taxon>
    </lineage>
</organism>
<keyword id="KW-0031">Aminopeptidase</keyword>
<keyword id="KW-0963">Cytoplasm</keyword>
<keyword id="KW-0378">Hydrolase</keyword>
<keyword id="KW-0464">Manganese</keyword>
<keyword id="KW-0479">Metal-binding</keyword>
<keyword id="KW-0645">Protease</keyword>
<keyword id="KW-1185">Reference proteome</keyword>
<comment type="function">
    <text evidence="1">Probably plays an important role in intracellular peptide degradation.</text>
</comment>
<comment type="catalytic activity">
    <reaction evidence="1">
        <text>Release of an N-terminal amino acid, Xaa, from a peptide or arylamide. Xaa is preferably Glu or Asp but may be other amino acids, including Leu, Met, His, Cys and Gln.</text>
        <dbReference type="EC" id="3.4.11.23"/>
    </reaction>
</comment>
<comment type="cofactor">
    <cofactor evidence="1">
        <name>Mn(2+)</name>
        <dbReference type="ChEBI" id="CHEBI:29035"/>
    </cofactor>
    <text evidence="1">Binds 2 manganese ions per subunit.</text>
</comment>
<comment type="subunit">
    <text evidence="1">Homohexamer.</text>
</comment>
<comment type="subcellular location">
    <subcellularLocation>
        <location evidence="1">Cytoplasm</location>
    </subcellularLocation>
</comment>
<comment type="similarity">
    <text evidence="1">Belongs to the peptidase M17 family.</text>
</comment>
<comment type="caution">
    <text evidence="2">Could be the product of a pseudogene.</text>
</comment>
<comment type="sequence caution" evidence="2">
    <conflict type="frameshift">
        <sequence resource="EMBL" id="L42023"/>
    </conflict>
    <text>This may be a natural frameshift.</text>
</comment>
<protein>
    <recommendedName>
        <fullName>Putative peptidase B</fullName>
        <ecNumber evidence="1">3.4.11.23</ecNumber>
    </recommendedName>
    <alternativeName>
        <fullName evidence="1">Aminopeptidase B</fullName>
    </alternativeName>
</protein>
<reference key="1">
    <citation type="journal article" date="1995" name="Science">
        <title>Whole-genome random sequencing and assembly of Haemophilus influenzae Rd.</title>
        <authorList>
            <person name="Fleischmann R.D."/>
            <person name="Adams M.D."/>
            <person name="White O."/>
            <person name="Clayton R.A."/>
            <person name="Kirkness E.F."/>
            <person name="Kerlavage A.R."/>
            <person name="Bult C.J."/>
            <person name="Tomb J.-F."/>
            <person name="Dougherty B.A."/>
            <person name="Merrick J.M."/>
            <person name="McKenney K."/>
            <person name="Sutton G.G."/>
            <person name="FitzHugh W."/>
            <person name="Fields C.A."/>
            <person name="Gocayne J.D."/>
            <person name="Scott J.D."/>
            <person name="Shirley R."/>
            <person name="Liu L.-I."/>
            <person name="Glodek A."/>
            <person name="Kelley J.M."/>
            <person name="Weidman J.F."/>
            <person name="Phillips C.A."/>
            <person name="Spriggs T."/>
            <person name="Hedblom E."/>
            <person name="Cotton M.D."/>
            <person name="Utterback T.R."/>
            <person name="Hanna M.C."/>
            <person name="Nguyen D.T."/>
            <person name="Saudek D.M."/>
            <person name="Brandon R.C."/>
            <person name="Fine L.D."/>
            <person name="Fritchman J.L."/>
            <person name="Fuhrmann J.L."/>
            <person name="Geoghagen N.S.M."/>
            <person name="Gnehm C.L."/>
            <person name="McDonald L.A."/>
            <person name="Small K.V."/>
            <person name="Fraser C.M."/>
            <person name="Smith H.O."/>
            <person name="Venter J.C."/>
        </authorList>
    </citation>
    <scope>NUCLEOTIDE SEQUENCE [LARGE SCALE GENOMIC DNA]</scope>
    <source>
        <strain>ATCC 51907 / DSM 11121 / KW20 / Rd</strain>
    </source>
</reference>